<evidence type="ECO:0000250" key="1"/>
<evidence type="ECO:0000255" key="2"/>
<evidence type="ECO:0000269" key="3">
    <source>
    </source>
</evidence>
<evidence type="ECO:0000305" key="4"/>
<evidence type="ECO:0007829" key="5">
    <source>
        <dbReference type="PDB" id="6K61"/>
    </source>
</evidence>
<comment type="subunit">
    <text evidence="3">The cyanobacterial PSI reaction center is composed of one copy each of PsaA,B,C,D,E,F,I,J,K,L,M and X, and forms dimeric and tetrameric complexes.</text>
</comment>
<comment type="subcellular location">
    <subcellularLocation>
        <location evidence="3">Cellular thylakoid membrane</location>
        <topology evidence="1">Single-pass membrane protein</topology>
    </subcellularLocation>
</comment>
<comment type="similarity">
    <text evidence="4">Belongs to the PsaX family.</text>
</comment>
<dbReference type="EMBL" id="BA000019">
    <property type="protein sequence ID" value="BAB73240.1"/>
    <property type="molecule type" value="Genomic_DNA"/>
</dbReference>
<dbReference type="PIR" id="AH1966">
    <property type="entry name" value="AH1966"/>
</dbReference>
<dbReference type="RefSeq" id="WP_010995455.1">
    <property type="nucleotide sequence ID" value="NZ_RSCN01000021.1"/>
</dbReference>
<dbReference type="PDB" id="6JEO">
    <property type="method" value="EM"/>
    <property type="resolution" value="3.30 A"/>
    <property type="chains" value="aX/bX/cX/dX=1-44"/>
</dbReference>
<dbReference type="PDB" id="6K61">
    <property type="method" value="EM"/>
    <property type="resolution" value="2.37 A"/>
    <property type="chains" value="X/x=1-44"/>
</dbReference>
<dbReference type="PDB" id="6TCL">
    <property type="method" value="EM"/>
    <property type="resolution" value="3.20 A"/>
    <property type="chains" value="X/X1/X2/XX=5-43"/>
</dbReference>
<dbReference type="PDB" id="7Y3F">
    <property type="method" value="EM"/>
    <property type="resolution" value="2.62 A"/>
    <property type="chains" value="X=1-44"/>
</dbReference>
<dbReference type="PDBsum" id="6JEO"/>
<dbReference type="PDBsum" id="6K61"/>
<dbReference type="PDBsum" id="6TCL"/>
<dbReference type="PDBsum" id="7Y3F"/>
<dbReference type="EMDB" id="EMD-10461"/>
<dbReference type="EMDB" id="EMD-33593"/>
<dbReference type="EMDB" id="EMD-9807"/>
<dbReference type="EMDB" id="EMD-9918"/>
<dbReference type="SMR" id="P58566"/>
<dbReference type="STRING" id="103690.gene:10493297"/>
<dbReference type="KEGG" id="ana:asr1283"/>
<dbReference type="eggNOG" id="ENOG5033C9V">
    <property type="taxonomic scope" value="Bacteria"/>
</dbReference>
<dbReference type="Proteomes" id="UP000002483">
    <property type="component" value="Chromosome"/>
</dbReference>
<dbReference type="GO" id="GO:0009522">
    <property type="term" value="C:photosystem I"/>
    <property type="evidence" value="ECO:0007669"/>
    <property type="project" value="UniProtKB-KW"/>
</dbReference>
<dbReference type="GO" id="GO:0031676">
    <property type="term" value="C:plasma membrane-derived thylakoid membrane"/>
    <property type="evidence" value="ECO:0007669"/>
    <property type="project" value="UniProtKB-SubCell"/>
</dbReference>
<dbReference type="GO" id="GO:0015979">
    <property type="term" value="P:photosynthesis"/>
    <property type="evidence" value="ECO:0007669"/>
    <property type="project" value="UniProtKB-KW"/>
</dbReference>
<dbReference type="InterPro" id="IPR012986">
    <property type="entry name" value="PSI_PsaX"/>
</dbReference>
<dbReference type="InterPro" id="IPR036243">
    <property type="entry name" value="PSI_PsaX_sf"/>
</dbReference>
<dbReference type="Pfam" id="PF08078">
    <property type="entry name" value="PsaX"/>
    <property type="match status" value="1"/>
</dbReference>
<dbReference type="SUPFAM" id="SSF81552">
    <property type="entry name" value="Subunit PsaX of photosystem I reaction centre"/>
    <property type="match status" value="1"/>
</dbReference>
<name>PSAX_NOSS1</name>
<proteinExistence type="evidence at protein level"/>
<reference key="1">
    <citation type="journal article" date="2001" name="DNA Res.">
        <title>Complete genomic sequence of the filamentous nitrogen-fixing cyanobacterium Anabaena sp. strain PCC 7120.</title>
        <authorList>
            <person name="Kaneko T."/>
            <person name="Nakamura Y."/>
            <person name="Wolk C.P."/>
            <person name="Kuritz T."/>
            <person name="Sasamoto S."/>
            <person name="Watanabe A."/>
            <person name="Iriguchi M."/>
            <person name="Ishikawa A."/>
            <person name="Kawashima K."/>
            <person name="Kimura T."/>
            <person name="Kishida Y."/>
            <person name="Kohara M."/>
            <person name="Matsumoto M."/>
            <person name="Matsuno A."/>
            <person name="Muraki A."/>
            <person name="Nakazaki N."/>
            <person name="Shimpo S."/>
            <person name="Sugimoto M."/>
            <person name="Takazawa M."/>
            <person name="Yamada M."/>
            <person name="Yasuda M."/>
            <person name="Tabata S."/>
        </authorList>
    </citation>
    <scope>NUCLEOTIDE SEQUENCE [LARGE SCALE GENOMIC DNA]</scope>
    <source>
        <strain>PCC 7120 / SAG 25.82 / UTEX 2576</strain>
    </source>
</reference>
<reference key="2">
    <citation type="journal article" date="2014" name="Proc. Natl. Acad. Sci. U.S.A.">
        <title>Attachment of phycobilisomes in an antenna-photosystem I supercomplex of cyanobacteria.</title>
        <authorList>
            <person name="Watanabe M."/>
            <person name="Semchonok D.A."/>
            <person name="Webber-Birungi M.T."/>
            <person name="Ehira S."/>
            <person name="Kondo K."/>
            <person name="Narikawa R."/>
            <person name="Ohmori M."/>
            <person name="Boekema E.J."/>
            <person name="Ikeuchi M."/>
        </authorList>
    </citation>
    <scope>PROTEIN SEQUENCE OF 2-11</scope>
    <scope>SUBUNIT</scope>
    <scope>SUBCELLULAR LOCATION</scope>
    <source>
        <strain>PCC 7120 / SAG 25.82 / UTEX 2576</strain>
    </source>
</reference>
<keyword id="KW-0002">3D-structure</keyword>
<keyword id="KW-0903">Direct protein sequencing</keyword>
<keyword id="KW-0472">Membrane</keyword>
<keyword id="KW-0602">Photosynthesis</keyword>
<keyword id="KW-0603">Photosystem I</keyword>
<keyword id="KW-1185">Reference proteome</keyword>
<keyword id="KW-0793">Thylakoid</keyword>
<keyword id="KW-0812">Transmembrane</keyword>
<keyword id="KW-1133">Transmembrane helix</keyword>
<sequence length="44" mass="4868">MAKAKISPVANTGAKPPYTFRTGWALLLLAVNFLVAAYYFHIIQ</sequence>
<accession>P58566</accession>
<protein>
    <recommendedName>
        <fullName>Photosystem I 4.8 kDa protein</fullName>
    </recommendedName>
</protein>
<organism>
    <name type="scientific">Nostoc sp. (strain PCC 7120 / SAG 25.82 / UTEX 2576)</name>
    <dbReference type="NCBI Taxonomy" id="103690"/>
    <lineage>
        <taxon>Bacteria</taxon>
        <taxon>Bacillati</taxon>
        <taxon>Cyanobacteriota</taxon>
        <taxon>Cyanophyceae</taxon>
        <taxon>Nostocales</taxon>
        <taxon>Nostocaceae</taxon>
        <taxon>Nostoc</taxon>
    </lineage>
</organism>
<feature type="initiator methionine" description="Removed" evidence="3">
    <location>
        <position position="1"/>
    </location>
</feature>
<feature type="chain" id="PRO_0000207774" description="Photosystem I 4.8 kDa protein">
    <location>
        <begin position="2"/>
        <end position="44"/>
    </location>
</feature>
<feature type="transmembrane region" description="Helical" evidence="2">
    <location>
        <begin position="23"/>
        <end position="43"/>
    </location>
</feature>
<feature type="helix" evidence="5">
    <location>
        <begin position="19"/>
        <end position="39"/>
    </location>
</feature>
<gene>
    <name type="primary">psaX</name>
    <name type="ordered locus">asr1283</name>
</gene>